<feature type="chain" id="PRO_1000212187" description="Cell division protein FtsB">
    <location>
        <begin position="1"/>
        <end position="114"/>
    </location>
</feature>
<feature type="topological domain" description="Cytoplasmic" evidence="1">
    <location>
        <begin position="1"/>
        <end position="3"/>
    </location>
</feature>
<feature type="transmembrane region" description="Helical" evidence="1">
    <location>
        <begin position="4"/>
        <end position="21"/>
    </location>
</feature>
<feature type="topological domain" description="Periplasmic" evidence="1">
    <location>
        <begin position="22"/>
        <end position="114"/>
    </location>
</feature>
<feature type="coiled-coil region" evidence="1">
    <location>
        <begin position="31"/>
        <end position="62"/>
    </location>
</feature>
<accession>C5BGJ2</accession>
<evidence type="ECO:0000255" key="1">
    <source>
        <dbReference type="HAMAP-Rule" id="MF_00599"/>
    </source>
</evidence>
<reference key="1">
    <citation type="submission" date="2009-03" db="EMBL/GenBank/DDBJ databases">
        <title>Complete genome sequence of Edwardsiella ictaluri 93-146.</title>
        <authorList>
            <person name="Williams M.L."/>
            <person name="Gillaspy A.F."/>
            <person name="Dyer D.W."/>
            <person name="Thune R.L."/>
            <person name="Waldbieser G.C."/>
            <person name="Schuster S.C."/>
            <person name="Gipson J."/>
            <person name="Zaitshik J."/>
            <person name="Landry C."/>
            <person name="Lawrence M.L."/>
        </authorList>
    </citation>
    <scope>NUCLEOTIDE SEQUENCE [LARGE SCALE GENOMIC DNA]</scope>
    <source>
        <strain>93-146</strain>
    </source>
</reference>
<comment type="function">
    <text evidence="1">Essential cell division protein. May link together the upstream cell division proteins, which are predominantly cytoplasmic, with the downstream cell division proteins, which are predominantly periplasmic.</text>
</comment>
<comment type="subunit">
    <text evidence="1">Part of a complex composed of FtsB, FtsL and FtsQ.</text>
</comment>
<comment type="subcellular location">
    <subcellularLocation>
        <location evidence="1">Cell inner membrane</location>
        <topology evidence="1">Single-pass type II membrane protein</topology>
    </subcellularLocation>
    <text evidence="1">Localizes to the division septum.</text>
</comment>
<comment type="similarity">
    <text evidence="1">Belongs to the FtsB family.</text>
</comment>
<keyword id="KW-0131">Cell cycle</keyword>
<keyword id="KW-0132">Cell division</keyword>
<keyword id="KW-0997">Cell inner membrane</keyword>
<keyword id="KW-1003">Cell membrane</keyword>
<keyword id="KW-0175">Coiled coil</keyword>
<keyword id="KW-0472">Membrane</keyword>
<keyword id="KW-0812">Transmembrane</keyword>
<keyword id="KW-1133">Transmembrane helix</keyword>
<sequence>MGKLTLLLVVLLGWLQYSLWVGKNGVHDYMRVKQDVATQQANNAKLKSRNDQLFAEIDDLNGGQEAIEERARNELGMIKPGETFYRLVPDQNKRRTVGTASQSVASYPSVTASH</sequence>
<name>FTSB_EDWI9</name>
<dbReference type="EMBL" id="CP001600">
    <property type="protein sequence ID" value="ACR70398.1"/>
    <property type="molecule type" value="Genomic_DNA"/>
</dbReference>
<dbReference type="RefSeq" id="WP_015872480.1">
    <property type="nucleotide sequence ID" value="NZ_CP169062.1"/>
</dbReference>
<dbReference type="SMR" id="C5BGJ2"/>
<dbReference type="STRING" id="67780.B6E78_07915"/>
<dbReference type="GeneID" id="69540121"/>
<dbReference type="KEGG" id="eic:NT01EI_3257"/>
<dbReference type="PATRIC" id="fig|634503.3.peg.2903"/>
<dbReference type="HOGENOM" id="CLU_134863_5_2_6"/>
<dbReference type="OrthoDB" id="7061211at2"/>
<dbReference type="Proteomes" id="UP000001485">
    <property type="component" value="Chromosome"/>
</dbReference>
<dbReference type="GO" id="GO:0032153">
    <property type="term" value="C:cell division site"/>
    <property type="evidence" value="ECO:0007669"/>
    <property type="project" value="UniProtKB-UniRule"/>
</dbReference>
<dbReference type="GO" id="GO:0030428">
    <property type="term" value="C:cell septum"/>
    <property type="evidence" value="ECO:0007669"/>
    <property type="project" value="TreeGrafter"/>
</dbReference>
<dbReference type="GO" id="GO:0005886">
    <property type="term" value="C:plasma membrane"/>
    <property type="evidence" value="ECO:0007669"/>
    <property type="project" value="UniProtKB-SubCell"/>
</dbReference>
<dbReference type="GO" id="GO:0043093">
    <property type="term" value="P:FtsZ-dependent cytokinesis"/>
    <property type="evidence" value="ECO:0007669"/>
    <property type="project" value="UniProtKB-UniRule"/>
</dbReference>
<dbReference type="Gene3D" id="1.20.5.400">
    <property type="match status" value="1"/>
</dbReference>
<dbReference type="HAMAP" id="MF_00599">
    <property type="entry name" value="FtsB"/>
    <property type="match status" value="1"/>
</dbReference>
<dbReference type="InterPro" id="IPR023081">
    <property type="entry name" value="Cell_div_FtsB"/>
</dbReference>
<dbReference type="InterPro" id="IPR007060">
    <property type="entry name" value="FtsL/DivIC"/>
</dbReference>
<dbReference type="NCBIfam" id="NF002058">
    <property type="entry name" value="PRK00888.1"/>
    <property type="match status" value="1"/>
</dbReference>
<dbReference type="PANTHER" id="PTHR37485">
    <property type="entry name" value="CELL DIVISION PROTEIN FTSB"/>
    <property type="match status" value="1"/>
</dbReference>
<dbReference type="PANTHER" id="PTHR37485:SF1">
    <property type="entry name" value="CELL DIVISION PROTEIN FTSB"/>
    <property type="match status" value="1"/>
</dbReference>
<dbReference type="Pfam" id="PF04977">
    <property type="entry name" value="DivIC"/>
    <property type="match status" value="1"/>
</dbReference>
<proteinExistence type="inferred from homology"/>
<organism>
    <name type="scientific">Edwardsiella ictaluri (strain 93-146)</name>
    <dbReference type="NCBI Taxonomy" id="634503"/>
    <lineage>
        <taxon>Bacteria</taxon>
        <taxon>Pseudomonadati</taxon>
        <taxon>Pseudomonadota</taxon>
        <taxon>Gammaproteobacteria</taxon>
        <taxon>Enterobacterales</taxon>
        <taxon>Hafniaceae</taxon>
        <taxon>Edwardsiella</taxon>
    </lineage>
</organism>
<gene>
    <name evidence="1" type="primary">ftsB</name>
    <name type="ordered locus">NT01EI_3257</name>
</gene>
<protein>
    <recommendedName>
        <fullName evidence="1">Cell division protein FtsB</fullName>
    </recommendedName>
</protein>